<organism>
    <name type="scientific">Actinobacillus pleuropneumoniae serotype 5b (strain L20)</name>
    <dbReference type="NCBI Taxonomy" id="416269"/>
    <lineage>
        <taxon>Bacteria</taxon>
        <taxon>Pseudomonadati</taxon>
        <taxon>Pseudomonadota</taxon>
        <taxon>Gammaproteobacteria</taxon>
        <taxon>Pasteurellales</taxon>
        <taxon>Pasteurellaceae</taxon>
        <taxon>Actinobacillus</taxon>
    </lineage>
</organism>
<reference key="1">
    <citation type="journal article" date="2008" name="J. Bacteriol.">
        <title>The complete genome sequence of Actinobacillus pleuropneumoniae L20 (serotype 5b).</title>
        <authorList>
            <person name="Foote S.J."/>
            <person name="Bosse J.T."/>
            <person name="Bouevitch A.B."/>
            <person name="Langford P.R."/>
            <person name="Young N.M."/>
            <person name="Nash J.H.E."/>
        </authorList>
    </citation>
    <scope>NUCLEOTIDE SEQUENCE [LARGE SCALE GENOMIC DNA]</scope>
    <source>
        <strain>L20</strain>
    </source>
</reference>
<keyword id="KW-0012">Acyltransferase</keyword>
<keyword id="KW-0067">ATP-binding</keyword>
<keyword id="KW-0963">Cytoplasm</keyword>
<keyword id="KW-0547">Nucleotide-binding</keyword>
<keyword id="KW-1185">Reference proteome</keyword>
<keyword id="KW-0694">RNA-binding</keyword>
<keyword id="KW-0808">Transferase</keyword>
<keyword id="KW-0819">tRNA processing</keyword>
<keyword id="KW-0820">tRNA-binding</keyword>
<gene>
    <name evidence="1" type="primary">tmcA</name>
    <name type="ordered locus">APL_0695</name>
</gene>
<accession>A3N059</accession>
<evidence type="ECO:0000255" key="1">
    <source>
        <dbReference type="HAMAP-Rule" id="MF_01886"/>
    </source>
</evidence>
<comment type="function">
    <text evidence="1">Catalyzes the formation of N(4)-acetylcytidine (ac(4)C) at the wobble position of tRNA(Met), by using acetyl-CoA as an acetyl donor and ATP (or GTP).</text>
</comment>
<comment type="catalytic activity">
    <reaction evidence="1">
        <text>cytidine(34) in elongator tRNA(Met) + acetyl-CoA + ATP + H2O = N(4)-acetylcytidine(34) in elongator tRNA(Met) + ADP + phosphate + CoA + H(+)</text>
        <dbReference type="Rhea" id="RHEA:43788"/>
        <dbReference type="Rhea" id="RHEA-COMP:10693"/>
        <dbReference type="Rhea" id="RHEA-COMP:10694"/>
        <dbReference type="ChEBI" id="CHEBI:15377"/>
        <dbReference type="ChEBI" id="CHEBI:15378"/>
        <dbReference type="ChEBI" id="CHEBI:30616"/>
        <dbReference type="ChEBI" id="CHEBI:43474"/>
        <dbReference type="ChEBI" id="CHEBI:57287"/>
        <dbReference type="ChEBI" id="CHEBI:57288"/>
        <dbReference type="ChEBI" id="CHEBI:74900"/>
        <dbReference type="ChEBI" id="CHEBI:82748"/>
        <dbReference type="ChEBI" id="CHEBI:456216"/>
        <dbReference type="EC" id="2.3.1.193"/>
    </reaction>
</comment>
<comment type="subcellular location">
    <subcellularLocation>
        <location evidence="1">Cytoplasm</location>
    </subcellularLocation>
</comment>
<comment type="similarity">
    <text evidence="1">Belongs to the RNA cytidine acetyltransferase family. TmcA subfamily.</text>
</comment>
<dbReference type="EC" id="2.3.1.193" evidence="1"/>
<dbReference type="EMBL" id="CP000569">
    <property type="protein sequence ID" value="ABN73795.1"/>
    <property type="molecule type" value="Genomic_DNA"/>
</dbReference>
<dbReference type="SMR" id="A3N059"/>
<dbReference type="STRING" id="416269.APL_0695"/>
<dbReference type="EnsemblBacteria" id="ABN73795">
    <property type="protein sequence ID" value="ABN73795"/>
    <property type="gene ID" value="APL_0695"/>
</dbReference>
<dbReference type="KEGG" id="apl:APL_0695"/>
<dbReference type="eggNOG" id="COG1444">
    <property type="taxonomic scope" value="Bacteria"/>
</dbReference>
<dbReference type="HOGENOM" id="CLU_004652_1_1_6"/>
<dbReference type="Proteomes" id="UP000001432">
    <property type="component" value="Chromosome"/>
</dbReference>
<dbReference type="GO" id="GO:0005737">
    <property type="term" value="C:cytoplasm"/>
    <property type="evidence" value="ECO:0007669"/>
    <property type="project" value="UniProtKB-SubCell"/>
</dbReference>
<dbReference type="GO" id="GO:1990883">
    <property type="term" value="F:18S rRNA cytidine N-acetyltransferase activity"/>
    <property type="evidence" value="ECO:0007669"/>
    <property type="project" value="TreeGrafter"/>
</dbReference>
<dbReference type="GO" id="GO:0005524">
    <property type="term" value="F:ATP binding"/>
    <property type="evidence" value="ECO:0007669"/>
    <property type="project" value="UniProtKB-UniRule"/>
</dbReference>
<dbReference type="GO" id="GO:0000049">
    <property type="term" value="F:tRNA binding"/>
    <property type="evidence" value="ECO:0007669"/>
    <property type="project" value="UniProtKB-UniRule"/>
</dbReference>
<dbReference type="GO" id="GO:0051392">
    <property type="term" value="F:tRNA N4-acetyltransferase activity"/>
    <property type="evidence" value="ECO:0007669"/>
    <property type="project" value="UniProtKB-UniRule"/>
</dbReference>
<dbReference type="GO" id="GO:1904812">
    <property type="term" value="P:rRNA acetylation involved in maturation of SSU-rRNA"/>
    <property type="evidence" value="ECO:0007669"/>
    <property type="project" value="TreeGrafter"/>
</dbReference>
<dbReference type="GO" id="GO:0051391">
    <property type="term" value="P:tRNA acetylation"/>
    <property type="evidence" value="ECO:0007669"/>
    <property type="project" value="UniProtKB-UniRule"/>
</dbReference>
<dbReference type="GO" id="GO:0002101">
    <property type="term" value="P:tRNA wobble cytosine modification"/>
    <property type="evidence" value="ECO:0007669"/>
    <property type="project" value="UniProtKB-UniRule"/>
</dbReference>
<dbReference type="CDD" id="cd04301">
    <property type="entry name" value="NAT_SF"/>
    <property type="match status" value="1"/>
</dbReference>
<dbReference type="Gene3D" id="3.40.50.11040">
    <property type="match status" value="1"/>
</dbReference>
<dbReference type="Gene3D" id="3.40.630.30">
    <property type="match status" value="1"/>
</dbReference>
<dbReference type="Gene3D" id="3.40.50.300">
    <property type="entry name" value="P-loop containing nucleotide triphosphate hydrolases"/>
    <property type="match status" value="1"/>
</dbReference>
<dbReference type="Gene3D" id="1.20.120.890">
    <property type="entry name" value="tRNA(Met) cytidine acetyltransferase, tail domain"/>
    <property type="match status" value="1"/>
</dbReference>
<dbReference type="HAMAP" id="MF_01886">
    <property type="entry name" value="tRNA_acetyltr_TmcA"/>
    <property type="match status" value="1"/>
</dbReference>
<dbReference type="InterPro" id="IPR016181">
    <property type="entry name" value="Acyl_CoA_acyltransferase"/>
</dbReference>
<dbReference type="InterPro" id="IPR000182">
    <property type="entry name" value="GNAT_dom"/>
</dbReference>
<dbReference type="InterPro" id="IPR007807">
    <property type="entry name" value="NAT10/TcmA_helicase"/>
</dbReference>
<dbReference type="InterPro" id="IPR027417">
    <property type="entry name" value="P-loop_NTPase"/>
</dbReference>
<dbReference type="InterPro" id="IPR032672">
    <property type="entry name" value="TmcA/NAT10/Kre33"/>
</dbReference>
<dbReference type="InterPro" id="IPR038321">
    <property type="entry name" value="TmcA_C_sf"/>
</dbReference>
<dbReference type="InterPro" id="IPR033442">
    <property type="entry name" value="TmcA_tRNA_bind"/>
</dbReference>
<dbReference type="InterPro" id="IPR024914">
    <property type="entry name" value="tRNA_acetyltr_TmcA"/>
</dbReference>
<dbReference type="PANTHER" id="PTHR10925">
    <property type="entry name" value="N-ACETYLTRANSFERASE 10"/>
    <property type="match status" value="1"/>
</dbReference>
<dbReference type="PANTHER" id="PTHR10925:SF5">
    <property type="entry name" value="RNA CYTIDINE ACETYLTRANSFERASE"/>
    <property type="match status" value="1"/>
</dbReference>
<dbReference type="Pfam" id="PF13718">
    <property type="entry name" value="GNAT_acetyltr_2"/>
    <property type="match status" value="2"/>
</dbReference>
<dbReference type="Pfam" id="PF05127">
    <property type="entry name" value="NAT10_TcmA_helicase"/>
    <property type="match status" value="1"/>
</dbReference>
<dbReference type="Pfam" id="PF17176">
    <property type="entry name" value="tRNA_bind_3"/>
    <property type="match status" value="1"/>
</dbReference>
<dbReference type="SUPFAM" id="SSF55729">
    <property type="entry name" value="Acyl-CoA N-acyltransferases (Nat)"/>
    <property type="match status" value="1"/>
</dbReference>
<dbReference type="SUPFAM" id="SSF52540">
    <property type="entry name" value="P-loop containing nucleoside triphosphate hydrolases"/>
    <property type="match status" value="1"/>
</dbReference>
<dbReference type="PROSITE" id="PS51186">
    <property type="entry name" value="GNAT"/>
    <property type="match status" value="1"/>
</dbReference>
<proteinExistence type="inferred from homology"/>
<protein>
    <recommendedName>
        <fullName evidence="1">tRNA(Met) cytidine acetyltransferase TmcA</fullName>
        <ecNumber evidence="1">2.3.1.193</ecNumber>
    </recommendedName>
</protein>
<name>TMCA_ACTP2</name>
<feature type="chain" id="PRO_0000403117" description="tRNA(Met) cytidine acetyltransferase TmcA">
    <location>
        <begin position="1"/>
        <end position="596"/>
    </location>
</feature>
<feature type="domain" description="N-acetyltransferase" evidence="1">
    <location>
        <begin position="328"/>
        <end position="481"/>
    </location>
</feature>
<feature type="binding site" evidence="1">
    <location>
        <position position="138"/>
    </location>
    <ligand>
        <name>ATP</name>
        <dbReference type="ChEBI" id="CHEBI:30616"/>
    </ligand>
</feature>
<feature type="binding site" evidence="1">
    <location>
        <begin position="160"/>
        <end position="169"/>
    </location>
    <ligand>
        <name>ATP</name>
        <dbReference type="ChEBI" id="CHEBI:30616"/>
    </ligand>
</feature>
<feature type="binding site" evidence="1">
    <location>
        <position position="285"/>
    </location>
    <ligand>
        <name>ATP</name>
        <dbReference type="ChEBI" id="CHEBI:30616"/>
    </ligand>
</feature>
<feature type="binding site" evidence="1">
    <location>
        <begin position="406"/>
        <end position="408"/>
    </location>
    <ligand>
        <name>acetyl-CoA</name>
        <dbReference type="ChEBI" id="CHEBI:57288"/>
    </ligand>
</feature>
<feature type="binding site" evidence="1">
    <location>
        <begin position="413"/>
        <end position="419"/>
    </location>
    <ligand>
        <name>acetyl-CoA</name>
        <dbReference type="ChEBI" id="CHEBI:57288"/>
    </ligand>
</feature>
<sequence>MILAEMPPLDGGIVIHSGNISQAKQYLGQEHPYAIYDMRAEGDVWLNLDALAIIAGTIQAQGTLYLICPNWDTLEQQLDFDSQRWNGGKVIATPNFYRYFKALVQKFGFQFQTLEETDFSLPKQPPQCQATESLTPQQQKIFEKLPLDSSAIHLITAPRGRGKSTLAGKLAQQLAKTESVLITARSHSVLPSFWKSVAQHIPFFAPDHLLQKIAANQIAAKSWLFIDESASLPLPMLHQFCEYFDKVVLTTTTHNYEGTGRGFSLKFPQQLTKQYREWRLTKPLRWHENDPLEQFIDELLIMSPPSETNQYAEFYHLLAEAHYKTTPSDLRRLFDAQDQLLHSFSEHQRLVGGIWAVPEGDLEPELAEAIWRGERRPQGNLVAQYLCFQGNLLEACQLRSVRISRIAVQPELQKQGIGKRLISDFILQKIQQTRPLVDYVSVSFGLSEPLLHFWQQCGFQLVQITPTKEASSGYHSAMMLYPISAEGQRFVQQATARFERDLALQPFYAELQNMLPIRPLVQLQMDEQDWRNIEGFALAQRSLAASYVSLTRLYRQDPRNHGVLANLWQQFERIQGKKEWLENLRSLLANYLQYTR</sequence>